<comment type="function">
    <text evidence="2 3">Receptor for the C-X-C chemokine CXCL12/SDF-1 that transduces a signal by increasing intracellular calcium ion levels and enhancing MAPK1/MAPK3 activation. Involved in the AKT signaling cascade (By similarity). Plays a role in regulation of cell migration, e.g. during wound healing. Acts as a receptor for extracellular ubiquitin; leading to enhanced intracellular calcium ions and reduced cellular cAMP levels. Binds bacterial lipopolysaccharide (LPS) et mediates LPS-induced inflammatory response, including TNF secretion by monocytes (By similarity). Involved in hematopoiesis and in cardiac ventricular septum formation. Also plays an essential role in vascularization of the gastrointestinal tract, probably by regulating vascular branching and/or remodeling processes in endothelial cells. Involved in cerebellar development. In the CNS, could mediate hippocampal-neuron survival (By similarity).</text>
</comment>
<comment type="subunit">
    <text evidence="2">Monomer. Can form homodimers. Interacts with CD164. Interacts with ARRB2; the interaction is dependent on the C-terminal phosphorylation of CXCR4 and allows activation of MAPK1 and MAPK3. Interacts with ARR3; the interaction is dependent on the C-terminal phosphorylation of CXCR4 and modulates calcium mobilization. Interacts with RNF113A; the interaction, enhanced by CXCL12, promotes CXCR4 ubiquitination and subsequent degradation. Interacts (via the cytoplasmic C-terminal) with ITCH (via the WW domains I and II); the interaction, enhanced by CXCL12, promotes CXCR4 ubiquitination and leads to its degradation. Interacts with extracellular ubiquitin. Interacts with DBN1; this interaction is enhanced by antigenic stimulation. Following LPS binding, may form a complex with GDF5, HSP90AA1 and HSPA8.</text>
</comment>
<comment type="subcellular location">
    <subcellularLocation>
        <location evidence="2">Cell membrane</location>
        <topology evidence="2">Multi-pass membrane protein</topology>
    </subcellularLocation>
    <subcellularLocation>
        <location evidence="1">Cell junction</location>
    </subcellularLocation>
    <subcellularLocation>
        <location evidence="1">Early endosome</location>
    </subcellularLocation>
    <subcellularLocation>
        <location evidence="1">Late endosome</location>
    </subcellularLocation>
    <subcellularLocation>
        <location evidence="1">Lysosome</location>
    </subcellularLocation>
    <text evidence="1">In unstimulated cells, diffuse pattern on plasma membrane. On agonist stimulation, colocalizes with ITCH at the plasma membrane where it becomes ubiquitinated (By similarity). In the presence of antigen, distributes to the immunological synapse forming at the T-cell-APC contact area, where it localizes at the peripheral and distal supramolecular activation cluster (SMAC) (By similarity).</text>
</comment>
<comment type="PTM">
    <text evidence="2">Phosphorylated on agonist stimulation. Rapidly phosphorylated on serine and threonine residues in the C-terminal. Phosphorylation at Ser-324 and Ser-325 leads to recruitment of ITCH, ubiquitination and protein degradation.</text>
</comment>
<comment type="PTM">
    <text evidence="2">Ubiquitinated after ligand binding, leading to its degradation. Ubiquitinated by ITCH at the cell membrane on agonist stimulation. The ubiquitin-dependent mechanism, endosomal sorting complex required for transport (ESCRT), then targets CXCR4 for lysosomal degradation. This process is dependent also on prior Ser-/Thr-phosphorylation in the C-terminal of CXCR4. Also binding of ARRB1 to STAM negatively regulates CXCR4 sorting to lysosomes though modulating ubiquitination of SFR5S.</text>
</comment>
<comment type="PTM">
    <text evidence="2">Sulfation is required for efficient binding of CXCL12/SDF-1alpha and promotes its dimerization.</text>
</comment>
<comment type="PTM">
    <text evidence="2">O- and N-glycosylated. N-glycosylation can mask coreceptor function. The O-glycosylation chondroitin sulfate attachment does not affect interaction with CXCL12/SDF-1alpha nor its coreceptor activity.</text>
</comment>
<comment type="similarity">
    <text evidence="4">Belongs to the G-protein coupled receptor 1 family.</text>
</comment>
<dbReference type="EMBL" id="AF031089">
    <property type="protein sequence ID" value="AAC63831.1"/>
    <property type="molecule type" value="mRNA"/>
</dbReference>
<dbReference type="RefSeq" id="NP_001106100.1">
    <property type="nucleotide sequence ID" value="NM_001112630.1"/>
</dbReference>
<dbReference type="SMR" id="P56491"/>
<dbReference type="STRING" id="9555.ENSPANP00000015466"/>
<dbReference type="GlyCosmos" id="P56491">
    <property type="glycosylation" value="2 sites, No reported glycans"/>
</dbReference>
<dbReference type="GeneID" id="100126711"/>
<dbReference type="KEGG" id="panu:100126711"/>
<dbReference type="CTD" id="7852"/>
<dbReference type="eggNOG" id="KOG3656">
    <property type="taxonomic scope" value="Eukaryota"/>
</dbReference>
<dbReference type="OrthoDB" id="3913at314294"/>
<dbReference type="Proteomes" id="UP000028761">
    <property type="component" value="Unplaced"/>
</dbReference>
<dbReference type="GO" id="GO:0070161">
    <property type="term" value="C:anchoring junction"/>
    <property type="evidence" value="ECO:0007669"/>
    <property type="project" value="UniProtKB-SubCell"/>
</dbReference>
<dbReference type="GO" id="GO:0005769">
    <property type="term" value="C:early endosome"/>
    <property type="evidence" value="ECO:0000250"/>
    <property type="project" value="UniProtKB"/>
</dbReference>
<dbReference type="GO" id="GO:0009897">
    <property type="term" value="C:external side of plasma membrane"/>
    <property type="evidence" value="ECO:0007669"/>
    <property type="project" value="TreeGrafter"/>
</dbReference>
<dbReference type="GO" id="GO:0005770">
    <property type="term" value="C:late endosome"/>
    <property type="evidence" value="ECO:0000250"/>
    <property type="project" value="UniProtKB"/>
</dbReference>
<dbReference type="GO" id="GO:0005764">
    <property type="term" value="C:lysosome"/>
    <property type="evidence" value="ECO:0000250"/>
    <property type="project" value="UniProtKB"/>
</dbReference>
<dbReference type="GO" id="GO:0005886">
    <property type="term" value="C:plasma membrane"/>
    <property type="evidence" value="ECO:0000250"/>
    <property type="project" value="UniProtKB"/>
</dbReference>
<dbReference type="GO" id="GO:0019957">
    <property type="term" value="F:C-C chemokine binding"/>
    <property type="evidence" value="ECO:0007669"/>
    <property type="project" value="TreeGrafter"/>
</dbReference>
<dbReference type="GO" id="GO:0016493">
    <property type="term" value="F:C-C chemokine receptor activity"/>
    <property type="evidence" value="ECO:0007669"/>
    <property type="project" value="TreeGrafter"/>
</dbReference>
<dbReference type="GO" id="GO:0038147">
    <property type="term" value="F:C-X-C motif chemokine 12 receptor activity"/>
    <property type="evidence" value="ECO:0000250"/>
    <property type="project" value="UniProtKB"/>
</dbReference>
<dbReference type="GO" id="GO:0007420">
    <property type="term" value="P:brain development"/>
    <property type="evidence" value="ECO:0007669"/>
    <property type="project" value="TreeGrafter"/>
</dbReference>
<dbReference type="GO" id="GO:0019722">
    <property type="term" value="P:calcium-mediated signaling"/>
    <property type="evidence" value="ECO:0007669"/>
    <property type="project" value="TreeGrafter"/>
</dbReference>
<dbReference type="GO" id="GO:0060326">
    <property type="term" value="P:cell chemotaxis"/>
    <property type="evidence" value="ECO:0007669"/>
    <property type="project" value="TreeGrafter"/>
</dbReference>
<dbReference type="GO" id="GO:0071345">
    <property type="term" value="P:cellular response to cytokine stimulus"/>
    <property type="evidence" value="ECO:0000250"/>
    <property type="project" value="UniProtKB"/>
</dbReference>
<dbReference type="GO" id="GO:0038160">
    <property type="term" value="P:CXCL12-activated CXCR4 signaling pathway"/>
    <property type="evidence" value="ECO:0000250"/>
    <property type="project" value="UniProtKB"/>
</dbReference>
<dbReference type="GO" id="GO:0006955">
    <property type="term" value="P:immune response"/>
    <property type="evidence" value="ECO:0007669"/>
    <property type="project" value="TreeGrafter"/>
</dbReference>
<dbReference type="GO" id="GO:0022008">
    <property type="term" value="P:neurogenesis"/>
    <property type="evidence" value="ECO:0007669"/>
    <property type="project" value="TreeGrafter"/>
</dbReference>
<dbReference type="GO" id="GO:0007204">
    <property type="term" value="P:positive regulation of cytosolic calcium ion concentration"/>
    <property type="evidence" value="ECO:0007669"/>
    <property type="project" value="TreeGrafter"/>
</dbReference>
<dbReference type="CDD" id="cd15179">
    <property type="entry name" value="7tmA_CXCR4"/>
    <property type="match status" value="1"/>
</dbReference>
<dbReference type="FunFam" id="1.20.1070.10:FF:000063">
    <property type="entry name" value="C-X-C chemokine receptor type 4"/>
    <property type="match status" value="1"/>
</dbReference>
<dbReference type="Gene3D" id="1.20.1070.10">
    <property type="entry name" value="Rhodopsin 7-helix transmembrane proteins"/>
    <property type="match status" value="1"/>
</dbReference>
<dbReference type="InterPro" id="IPR050119">
    <property type="entry name" value="CCR1-9-like"/>
</dbReference>
<dbReference type="InterPro" id="IPR022726">
    <property type="entry name" value="Chemokine_CXCR4_N_dom"/>
</dbReference>
<dbReference type="InterPro" id="IPR000355">
    <property type="entry name" value="Chemokine_rcpt"/>
</dbReference>
<dbReference type="InterPro" id="IPR001277">
    <property type="entry name" value="CXCR4/ACKR2"/>
</dbReference>
<dbReference type="InterPro" id="IPR000276">
    <property type="entry name" value="GPCR_Rhodpsn"/>
</dbReference>
<dbReference type="InterPro" id="IPR017452">
    <property type="entry name" value="GPCR_Rhodpsn_7TM"/>
</dbReference>
<dbReference type="PANTHER" id="PTHR10489:SF594">
    <property type="entry name" value="C-X-C CHEMOKINE RECEPTOR TYPE 4"/>
    <property type="match status" value="1"/>
</dbReference>
<dbReference type="PANTHER" id="PTHR10489">
    <property type="entry name" value="CELL ADHESION MOLECULE"/>
    <property type="match status" value="1"/>
</dbReference>
<dbReference type="Pfam" id="PF00001">
    <property type="entry name" value="7tm_1"/>
    <property type="match status" value="1"/>
</dbReference>
<dbReference type="Pfam" id="PF12109">
    <property type="entry name" value="CXCR4_N"/>
    <property type="match status" value="1"/>
</dbReference>
<dbReference type="PRINTS" id="PR00657">
    <property type="entry name" value="CCCHEMOKINER"/>
</dbReference>
<dbReference type="PRINTS" id="PR00645">
    <property type="entry name" value="CXCCHMKINER4"/>
</dbReference>
<dbReference type="PRINTS" id="PR00237">
    <property type="entry name" value="GPCRRHODOPSN"/>
</dbReference>
<dbReference type="SUPFAM" id="SSF81321">
    <property type="entry name" value="Family A G protein-coupled receptor-like"/>
    <property type="match status" value="1"/>
</dbReference>
<dbReference type="PROSITE" id="PS00237">
    <property type="entry name" value="G_PROTEIN_RECEP_F1_1"/>
    <property type="match status" value="1"/>
</dbReference>
<dbReference type="PROSITE" id="PS50262">
    <property type="entry name" value="G_PROTEIN_RECEP_F1_2"/>
    <property type="match status" value="1"/>
</dbReference>
<gene>
    <name type="primary">CXCR4</name>
</gene>
<feature type="chain" id="PRO_0000069357" description="C-X-C chemokine receptor type 4">
    <location>
        <begin position="1"/>
        <end position="352"/>
    </location>
</feature>
<feature type="topological domain" description="Extracellular" evidence="6">
    <location>
        <begin position="1"/>
        <end position="38"/>
    </location>
</feature>
<feature type="transmembrane region" description="Helical; Name=1" evidence="2">
    <location>
        <begin position="39"/>
        <end position="63"/>
    </location>
</feature>
<feature type="topological domain" description="Cytoplasmic" evidence="6">
    <location>
        <begin position="64"/>
        <end position="77"/>
    </location>
</feature>
<feature type="transmembrane region" description="Helical; Name=2" evidence="2">
    <location>
        <begin position="78"/>
        <end position="99"/>
    </location>
</feature>
<feature type="topological domain" description="Extracellular" evidence="6">
    <location>
        <begin position="100"/>
        <end position="110"/>
    </location>
</feature>
<feature type="transmembrane region" description="Helical; Name=3" evidence="2">
    <location>
        <begin position="111"/>
        <end position="130"/>
    </location>
</feature>
<feature type="topological domain" description="Cytoplasmic" evidence="6">
    <location>
        <begin position="131"/>
        <end position="154"/>
    </location>
</feature>
<feature type="transmembrane region" description="Helical; Name=4" evidence="2">
    <location>
        <begin position="155"/>
        <end position="174"/>
    </location>
</feature>
<feature type="topological domain" description="Extracellular" evidence="6">
    <location>
        <begin position="175"/>
        <end position="195"/>
    </location>
</feature>
<feature type="transmembrane region" description="Helical; Name=5" evidence="2">
    <location>
        <begin position="196"/>
        <end position="216"/>
    </location>
</feature>
<feature type="topological domain" description="Cytoplasmic" evidence="6">
    <location>
        <begin position="217"/>
        <end position="241"/>
    </location>
</feature>
<feature type="transmembrane region" description="Helical; Name=6" evidence="2">
    <location>
        <begin position="242"/>
        <end position="261"/>
    </location>
</feature>
<feature type="topological domain" description="Extracellular" evidence="6">
    <location>
        <begin position="262"/>
        <end position="282"/>
    </location>
</feature>
<feature type="transmembrane region" description="Helical; Name=7" evidence="2">
    <location>
        <begin position="283"/>
        <end position="302"/>
    </location>
</feature>
<feature type="topological domain" description="Cytoplasmic" evidence="6">
    <location>
        <begin position="303"/>
        <end position="352"/>
    </location>
</feature>
<feature type="region of interest" description="Important for chemokine binding and signaling" evidence="1">
    <location>
        <begin position="1"/>
        <end position="21"/>
    </location>
</feature>
<feature type="region of interest" description="Chemokine binding" evidence="1">
    <location>
        <begin position="94"/>
        <end position="97"/>
    </location>
</feature>
<feature type="region of interest" description="Chemokine binding" evidence="1">
    <location>
        <begin position="113"/>
        <end position="117"/>
    </location>
</feature>
<feature type="region of interest" description="Involved in dimerization; when bound to chemokine" evidence="1">
    <location>
        <begin position="135"/>
        <end position="147"/>
    </location>
</feature>
<feature type="region of interest" description="Chemokine binding, important for signaling" evidence="1">
    <location>
        <begin position="186"/>
        <end position="190"/>
    </location>
</feature>
<feature type="region of interest" description="Involved in dimerization" evidence="1">
    <location>
        <begin position="191"/>
        <end position="210"/>
    </location>
</feature>
<feature type="region of interest" description="Involved in dimerization" evidence="1">
    <location>
        <begin position="266"/>
        <end position="268"/>
    </location>
</feature>
<feature type="region of interest" description="Disordered" evidence="5">
    <location>
        <begin position="329"/>
        <end position="352"/>
    </location>
</feature>
<feature type="short sequence motif" description="Important for signaling" evidence="1">
    <location>
        <begin position="133"/>
        <end position="135"/>
    </location>
</feature>
<feature type="compositionally biased region" description="Low complexity" evidence="5">
    <location>
        <begin position="337"/>
        <end position="352"/>
    </location>
</feature>
<feature type="site" description="Chemokine" evidence="1">
    <location>
        <position position="171"/>
    </location>
</feature>
<feature type="site" description="Chemokine" evidence="1">
    <location>
        <position position="288"/>
    </location>
</feature>
<feature type="modified residue" description="Sulfotyrosine" evidence="2">
    <location>
        <position position="7"/>
    </location>
</feature>
<feature type="modified residue" description="Sulfotyrosine" evidence="2">
    <location>
        <position position="12"/>
    </location>
</feature>
<feature type="modified residue" description="Sulfotyrosine" evidence="2">
    <location>
        <position position="21"/>
    </location>
</feature>
<feature type="modified residue" description="Phosphoserine" evidence="2">
    <location>
        <position position="319"/>
    </location>
</feature>
<feature type="modified residue" description="Phosphoserine" evidence="2">
    <location>
        <position position="321"/>
    </location>
</feature>
<feature type="modified residue" description="Phosphoserine; by PKC and GRK6" evidence="2">
    <location>
        <position position="324"/>
    </location>
</feature>
<feature type="modified residue" description="Phosphoserine; by PKC and GRK6" evidence="2">
    <location>
        <position position="325"/>
    </location>
</feature>
<feature type="modified residue" description="Phosphoserine; by GRK6" evidence="2">
    <location>
        <position position="330"/>
    </location>
</feature>
<feature type="modified residue" description="Phosphoserine; by GRK6" evidence="2">
    <location>
        <position position="339"/>
    </location>
</feature>
<feature type="modified residue" description="Phosphoserine" evidence="2">
    <location>
        <position position="348"/>
    </location>
</feature>
<feature type="modified residue" description="Phosphoserine" evidence="2">
    <location>
        <position position="351"/>
    </location>
</feature>
<feature type="glycosylation site" description="N-linked (GlcNAc...) asparagine" evidence="1">
    <location>
        <position position="11"/>
    </location>
</feature>
<feature type="glycosylation site" description="O-linked (Xyl...) (chondroitin sulfate) serine" evidence="2">
    <location>
        <position position="18"/>
    </location>
</feature>
<feature type="disulfide bond" evidence="4">
    <location>
        <begin position="28"/>
        <end position="274"/>
    </location>
</feature>
<feature type="disulfide bond" evidence="4">
    <location>
        <begin position="109"/>
        <end position="186"/>
    </location>
</feature>
<feature type="cross-link" description="Glycyl lysine isopeptide (Lys-Gly) (interchain with G-Cter in ubiquitin)" evidence="2">
    <location>
        <position position="331"/>
    </location>
</feature>
<name>CXCR4_PAPAN</name>
<reference key="1">
    <citation type="journal article" date="1998" name="Mol. Immunol.">
        <title>Sequence comparisons of non-human primate HIV-1 coreceptor homologues.</title>
        <authorList>
            <person name="Benton P.A."/>
            <person name="Lee D.R."/>
            <person name="Kennedy R.C."/>
        </authorList>
    </citation>
    <scope>NUCLEOTIDE SEQUENCE [MRNA]</scope>
</reference>
<accession>P56491</accession>
<proteinExistence type="evidence at transcript level"/>
<keyword id="KW-0965">Cell junction</keyword>
<keyword id="KW-1003">Cell membrane</keyword>
<keyword id="KW-1015">Disulfide bond</keyword>
<keyword id="KW-0967">Endosome</keyword>
<keyword id="KW-0297">G-protein coupled receptor</keyword>
<keyword id="KW-0325">Glycoprotein</keyword>
<keyword id="KW-1017">Isopeptide bond</keyword>
<keyword id="KW-0458">Lysosome</keyword>
<keyword id="KW-0472">Membrane</keyword>
<keyword id="KW-0597">Phosphoprotein</keyword>
<keyword id="KW-0654">Proteoglycan</keyword>
<keyword id="KW-0675">Receptor</keyword>
<keyword id="KW-1185">Reference proteome</keyword>
<keyword id="KW-0765">Sulfation</keyword>
<keyword id="KW-0807">Transducer</keyword>
<keyword id="KW-0812">Transmembrane</keyword>
<keyword id="KW-1133">Transmembrane helix</keyword>
<keyword id="KW-0832">Ubl conjugation</keyword>
<organism>
    <name type="scientific">Papio anubis</name>
    <name type="common">Olive baboon</name>
    <dbReference type="NCBI Taxonomy" id="9555"/>
    <lineage>
        <taxon>Eukaryota</taxon>
        <taxon>Metazoa</taxon>
        <taxon>Chordata</taxon>
        <taxon>Craniata</taxon>
        <taxon>Vertebrata</taxon>
        <taxon>Euteleostomi</taxon>
        <taxon>Mammalia</taxon>
        <taxon>Eutheria</taxon>
        <taxon>Euarchontoglires</taxon>
        <taxon>Primates</taxon>
        <taxon>Haplorrhini</taxon>
        <taxon>Catarrhini</taxon>
        <taxon>Cercopithecidae</taxon>
        <taxon>Cercopithecinae</taxon>
        <taxon>Papio</taxon>
    </lineage>
</organism>
<sequence>MEGISIYTSDNYTEEMGSGDYDSIKEPCFREENAHFNRIFLPTIYSIIFLTGIVGNGLVILVMGYQKKLRSMTDKYRLHLSVADLLFVITLPFWAVDAVANWYFGNFLCKAVHVIYTVNLYSSVLILAFISLDRYLAIVHATNSQRPRKLLAEKVVYVGVWIPALLLTIPDFIFASVSEADDRYICDRFYPNDLWVVVFQFQHIMVGLILPGIVILSCYCIIISKLSHSKGHQKRKALKTTVILILAFFACWLPYYIGISIDSFILLEIIKQGCEFENTVHKWISITEALAFFHCCLNPILYAFLGAKFKTSAQHALTSVSRGSSLKILSKGKRGGHSSVSTESESSSFHSS</sequence>
<evidence type="ECO:0000250" key="1"/>
<evidence type="ECO:0000250" key="2">
    <source>
        <dbReference type="UniProtKB" id="P61073"/>
    </source>
</evidence>
<evidence type="ECO:0000250" key="3">
    <source>
        <dbReference type="UniProtKB" id="P70658"/>
    </source>
</evidence>
<evidence type="ECO:0000255" key="4">
    <source>
        <dbReference type="PROSITE-ProRule" id="PRU00521"/>
    </source>
</evidence>
<evidence type="ECO:0000256" key="5">
    <source>
        <dbReference type="SAM" id="MobiDB-lite"/>
    </source>
</evidence>
<evidence type="ECO:0000305" key="6"/>
<protein>
    <recommendedName>
        <fullName>C-X-C chemokine receptor type 4</fullName>
        <shortName>CXC-R4</shortName>
        <shortName>CXCR-4</shortName>
    </recommendedName>
    <alternativeName>
        <fullName>Fusin</fullName>
    </alternativeName>
    <alternativeName>
        <fullName>Stromal cell-derived factor 1 receptor</fullName>
        <shortName>SDF-1 receptor</shortName>
    </alternativeName>
    <cdAntigenName>CD184</cdAntigenName>
</protein>